<feature type="signal peptide" evidence="2">
    <location>
        <begin position="1"/>
        <end position="17"/>
    </location>
</feature>
<feature type="chain" id="PRO_0000036166" description="Glycosyl-phosphatidylinositol-anchored molecule-like protein">
    <location>
        <begin position="18"/>
        <end position="158"/>
    </location>
</feature>
<feature type="domain" description="UPAR/Ly6">
    <location>
        <begin position="29"/>
        <end position="134"/>
    </location>
</feature>
<feature type="disulfide bond" evidence="1">
    <location>
        <begin position="31"/>
        <end position="55"/>
    </location>
</feature>
<feature type="disulfide bond" evidence="1">
    <location>
        <begin position="34"/>
        <end position="42"/>
    </location>
</feature>
<feature type="disulfide bond" evidence="1">
    <location>
        <begin position="48"/>
        <end position="73"/>
    </location>
</feature>
<feature type="disulfide bond" evidence="1">
    <location>
        <begin position="77"/>
        <end position="104"/>
    </location>
</feature>
<feature type="disulfide bond" evidence="1">
    <location>
        <begin position="105"/>
        <end position="110"/>
    </location>
</feature>
<feature type="sequence variant" id="VAR_020174" description="In dbSNP:rs3764795.">
    <original>R</original>
    <variation>C</variation>
    <location>
        <position position="54"/>
    </location>
</feature>
<protein>
    <recommendedName>
        <fullName>Glycosyl-phosphatidylinositol-anchored molecule-like protein</fullName>
    </recommendedName>
</protein>
<sequence>MLLFALLLAMELPLVAASATMRAQWTYSLRCHDCAVINDFNCPNIRVCPYHIRRCMTISIRINSRELLVYKNCTNNCTFVYAAEQPPEAPGKIFKTNSFYWVCCCNSMVCNAGGPTNLERDMLPDEVTEEELPEGTVRLGVSKLLLSFASIIVSNILP</sequence>
<evidence type="ECO:0000250" key="1"/>
<evidence type="ECO:0000255" key="2"/>
<evidence type="ECO:0000269" key="3">
    <source>
    </source>
</evidence>
<evidence type="ECO:0000305" key="4"/>
<organism>
    <name type="scientific">Homo sapiens</name>
    <name type="common">Human</name>
    <dbReference type="NCBI Taxonomy" id="9606"/>
    <lineage>
        <taxon>Eukaryota</taxon>
        <taxon>Metazoa</taxon>
        <taxon>Chordata</taxon>
        <taxon>Craniata</taxon>
        <taxon>Vertebrata</taxon>
        <taxon>Euteleostomi</taxon>
        <taxon>Mammalia</taxon>
        <taxon>Eutheria</taxon>
        <taxon>Euarchontoglires</taxon>
        <taxon>Primates</taxon>
        <taxon>Haplorrhini</taxon>
        <taxon>Catarrhini</taxon>
        <taxon>Hominidae</taxon>
        <taxon>Homo</taxon>
    </lineage>
</organism>
<name>GML_HUMAN</name>
<proteinExistence type="evidence at transcript level"/>
<comment type="function">
    <text>May play a role in the apoptotic pathway or cell-cycle regulation induced by p53/TP53 after DNA damage.</text>
</comment>
<comment type="subcellular location">
    <subcellularLocation>
        <location evidence="4">Cell membrane</location>
        <topology evidence="4">Lipid-anchor</topology>
        <topology evidence="4">GPI-anchor</topology>
    </subcellularLocation>
</comment>
<comment type="induction">
    <text evidence="3">By p53/TP53.</text>
</comment>
<keyword id="KW-1003">Cell membrane</keyword>
<keyword id="KW-1015">Disulfide bond</keyword>
<keyword id="KW-0325">Glycoprotein</keyword>
<keyword id="KW-0336">GPI-anchor</keyword>
<keyword id="KW-0449">Lipoprotein</keyword>
<keyword id="KW-0472">Membrane</keyword>
<keyword id="KW-1185">Reference proteome</keyword>
<keyword id="KW-0732">Signal</keyword>
<gene>
    <name type="primary">GML</name>
    <name type="synonym">LY6DL</name>
</gene>
<accession>Q99445</accession>
<accession>A0AVF6</accession>
<accession>O00686</accession>
<accession>O00731</accession>
<reference key="1">
    <citation type="journal article" date="1996" name="Oncogene">
        <title>Isolation of a novel GPI-anchored gene specifically regulated by p53; correlation between its expression and anti-cancer drug sensitivity.</title>
        <authorList>
            <person name="Furuhata T."/>
            <person name="Tokino T."/>
            <person name="Urano T."/>
            <person name="Nakamura Y."/>
        </authorList>
    </citation>
    <scope>NUCLEOTIDE SEQUENCE [GENOMIC DNA / MRNA]</scope>
    <scope>INDUCTION BY TP53</scope>
</reference>
<reference key="2">
    <citation type="journal article" date="1997" name="Genomics">
        <title>Genomic structure and chromosomal localization of GML (GPI-anchored molecule-like protein), a gene induced by p53.</title>
        <authorList>
            <person name="Kimura Y."/>
            <person name="Furuhata T."/>
            <person name="Urano T."/>
            <person name="Hirata K."/>
            <person name="Nakamura Y."/>
            <person name="Tokino T."/>
        </authorList>
    </citation>
    <scope>NUCLEOTIDE SEQUENCE [GENOMIC DNA]</scope>
</reference>
<reference key="3">
    <citation type="journal article" date="2004" name="Genome Res.">
        <title>The status, quality, and expansion of the NIH full-length cDNA project: the Mammalian Gene Collection (MGC).</title>
        <authorList>
            <consortium name="The MGC Project Team"/>
        </authorList>
    </citation>
    <scope>NUCLEOTIDE SEQUENCE [LARGE SCALE MRNA]</scope>
    <source>
        <tissue>Testis</tissue>
    </source>
</reference>
<dbReference type="EMBL" id="D84290">
    <property type="protein sequence ID" value="BAA12300.1"/>
    <property type="molecule type" value="mRNA"/>
</dbReference>
<dbReference type="EMBL" id="AB000381">
    <property type="protein sequence ID" value="BAA19961.1"/>
    <property type="molecule type" value="Genomic_DNA"/>
</dbReference>
<dbReference type="EMBL" id="BC074930">
    <property type="protein sequence ID" value="AAH74930.1"/>
    <property type="molecule type" value="mRNA"/>
</dbReference>
<dbReference type="EMBL" id="BC126336">
    <property type="protein sequence ID" value="AAI26337.1"/>
    <property type="molecule type" value="mRNA"/>
</dbReference>
<dbReference type="EMBL" id="BC126338">
    <property type="protein sequence ID" value="AAI26339.1"/>
    <property type="molecule type" value="mRNA"/>
</dbReference>
<dbReference type="CCDS" id="CCDS6391.1"/>
<dbReference type="RefSeq" id="NP_002057.1">
    <property type="nucleotide sequence ID" value="NM_002066.3"/>
</dbReference>
<dbReference type="BioGRID" id="109027">
    <property type="interactions" value="78"/>
</dbReference>
<dbReference type="FunCoup" id="Q99445">
    <property type="interactions" value="27"/>
</dbReference>
<dbReference type="IntAct" id="Q99445">
    <property type="interactions" value="57"/>
</dbReference>
<dbReference type="STRING" id="9606.ENSP00000220940"/>
<dbReference type="TCDB" id="9.A.71.1.1">
    <property type="family name" value="the glycosylphosphatidylinositol-anchored protein (gpi-ap) family"/>
</dbReference>
<dbReference type="BioMuta" id="GML"/>
<dbReference type="DMDM" id="3183013"/>
<dbReference type="MassIVE" id="Q99445"/>
<dbReference type="PaxDb" id="9606-ENSP00000220940"/>
<dbReference type="Antibodypedia" id="27797">
    <property type="antibodies" value="51 antibodies from 14 providers"/>
</dbReference>
<dbReference type="DNASU" id="2765"/>
<dbReference type="Ensembl" id="ENST00000220940.2">
    <property type="protein sequence ID" value="ENSP00000220940.1"/>
    <property type="gene ID" value="ENSG00000104499.7"/>
</dbReference>
<dbReference type="GeneID" id="2765"/>
<dbReference type="KEGG" id="hsa:2765"/>
<dbReference type="MANE-Select" id="ENST00000220940.2">
    <property type="protein sequence ID" value="ENSP00000220940.1"/>
    <property type="RefSeq nucleotide sequence ID" value="NM_002066.3"/>
    <property type="RefSeq protein sequence ID" value="NP_002057.1"/>
</dbReference>
<dbReference type="UCSC" id="uc003yxg.3">
    <property type="organism name" value="human"/>
</dbReference>
<dbReference type="AGR" id="HGNC:4375"/>
<dbReference type="CTD" id="2765"/>
<dbReference type="DisGeNET" id="2765"/>
<dbReference type="GeneCards" id="GML"/>
<dbReference type="HGNC" id="HGNC:4375">
    <property type="gene designation" value="GML"/>
</dbReference>
<dbReference type="HPA" id="ENSG00000104499">
    <property type="expression patterns" value="Tissue enriched (adrenal)"/>
</dbReference>
<dbReference type="MIM" id="602370">
    <property type="type" value="gene"/>
</dbReference>
<dbReference type="neXtProt" id="NX_Q99445"/>
<dbReference type="OpenTargets" id="ENSG00000104499"/>
<dbReference type="PharmGKB" id="PA28760"/>
<dbReference type="VEuPathDB" id="HostDB:ENSG00000104499"/>
<dbReference type="eggNOG" id="ENOG502RU0V">
    <property type="taxonomic scope" value="Eukaryota"/>
</dbReference>
<dbReference type="GeneTree" id="ENSGT00940000159966"/>
<dbReference type="HOGENOM" id="CLU_1668850_0_0_1"/>
<dbReference type="InParanoid" id="Q99445"/>
<dbReference type="OMA" id="YFVRCCG"/>
<dbReference type="OrthoDB" id="9837583at2759"/>
<dbReference type="PAN-GO" id="Q99445">
    <property type="GO annotations" value="0 GO annotations based on evolutionary models"/>
</dbReference>
<dbReference type="PhylomeDB" id="Q99445"/>
<dbReference type="TreeFam" id="TF336908"/>
<dbReference type="PathwayCommons" id="Q99445"/>
<dbReference type="SignaLink" id="Q99445"/>
<dbReference type="BioGRID-ORCS" id="2765">
    <property type="hits" value="49 hits in 1147 CRISPR screens"/>
</dbReference>
<dbReference type="ChiTaRS" id="GML">
    <property type="organism name" value="human"/>
</dbReference>
<dbReference type="GenomeRNAi" id="2765"/>
<dbReference type="Pharos" id="Q99445">
    <property type="development level" value="Tdark"/>
</dbReference>
<dbReference type="PRO" id="PR:Q99445"/>
<dbReference type="Proteomes" id="UP000005640">
    <property type="component" value="Chromosome 8"/>
</dbReference>
<dbReference type="RNAct" id="Q99445">
    <property type="molecule type" value="protein"/>
</dbReference>
<dbReference type="Bgee" id="ENSG00000104499">
    <property type="expression patterns" value="Expressed in right adrenal gland cortex and 78 other cell types or tissues"/>
</dbReference>
<dbReference type="ExpressionAtlas" id="Q99445">
    <property type="expression patterns" value="baseline and differential"/>
</dbReference>
<dbReference type="GO" id="GO:0019898">
    <property type="term" value="C:extrinsic component of membrane"/>
    <property type="evidence" value="ECO:0000304"/>
    <property type="project" value="ProtInc"/>
</dbReference>
<dbReference type="GO" id="GO:0005886">
    <property type="term" value="C:plasma membrane"/>
    <property type="evidence" value="ECO:0000304"/>
    <property type="project" value="ProtInc"/>
</dbReference>
<dbReference type="GO" id="GO:0098552">
    <property type="term" value="C:side of membrane"/>
    <property type="evidence" value="ECO:0007669"/>
    <property type="project" value="UniProtKB-KW"/>
</dbReference>
<dbReference type="GO" id="GO:0006915">
    <property type="term" value="P:apoptotic process"/>
    <property type="evidence" value="ECO:0000304"/>
    <property type="project" value="ProtInc"/>
</dbReference>
<dbReference type="GO" id="GO:0030330">
    <property type="term" value="P:DNA damage response, signal transduction by p53 class mediator"/>
    <property type="evidence" value="ECO:0000304"/>
    <property type="project" value="ProtInc"/>
</dbReference>
<dbReference type="GO" id="GO:0008285">
    <property type="term" value="P:negative regulation of cell population proliferation"/>
    <property type="evidence" value="ECO:0000304"/>
    <property type="project" value="ProtInc"/>
</dbReference>
<dbReference type="CDD" id="cd23555">
    <property type="entry name" value="TFP_LU_ECD_GML"/>
    <property type="match status" value="1"/>
</dbReference>
<dbReference type="Gene3D" id="2.10.60.10">
    <property type="entry name" value="CD59"/>
    <property type="match status" value="1"/>
</dbReference>
<dbReference type="InterPro" id="IPR018363">
    <property type="entry name" value="CD59_antigen_CS"/>
</dbReference>
<dbReference type="InterPro" id="IPR016054">
    <property type="entry name" value="LY6_UPA_recep-like"/>
</dbReference>
<dbReference type="InterPro" id="IPR045860">
    <property type="entry name" value="Snake_toxin-like_sf"/>
</dbReference>
<dbReference type="InterPro" id="IPR052874">
    <property type="entry name" value="Sperm-ZP_regulatory"/>
</dbReference>
<dbReference type="PANTHER" id="PTHR15049:SF2">
    <property type="entry name" value="GLYCOSYL-PHOSPHATIDYLINOSITOL-ANCHORED MOLECULE-LIKE PROTEIN"/>
    <property type="match status" value="1"/>
</dbReference>
<dbReference type="PANTHER" id="PTHR15049">
    <property type="entry name" value="GLYCOSYL-PHOSPHATIDYLINOSITOL-ANCHORED MOLECULE-LIKE PROTEIN-RELATED"/>
    <property type="match status" value="1"/>
</dbReference>
<dbReference type="SMART" id="SM00134">
    <property type="entry name" value="LU"/>
    <property type="match status" value="1"/>
</dbReference>
<dbReference type="SUPFAM" id="SSF57302">
    <property type="entry name" value="Snake toxin-like"/>
    <property type="match status" value="1"/>
</dbReference>
<dbReference type="PROSITE" id="PS00983">
    <property type="entry name" value="LY6_UPAR"/>
    <property type="match status" value="1"/>
</dbReference>